<feature type="initiator methionine" description="Removed" evidence="1">
    <location>
        <position position="1"/>
    </location>
</feature>
<feature type="chain" id="PRO_0000268490" description="Bifunctional protein FolD">
    <location>
        <begin position="2"/>
        <end position="288"/>
    </location>
</feature>
<feature type="binding site" evidence="2">
    <location>
        <begin position="166"/>
        <end position="168"/>
    </location>
    <ligand>
        <name>NADP(+)</name>
        <dbReference type="ChEBI" id="CHEBI:58349"/>
    </ligand>
</feature>
<feature type="binding site" evidence="2">
    <location>
        <position position="232"/>
    </location>
    <ligand>
        <name>NADP(+)</name>
        <dbReference type="ChEBI" id="CHEBI:58349"/>
    </ligand>
</feature>
<organism>
    <name type="scientific">Salmonella choleraesuis (strain SC-B67)</name>
    <dbReference type="NCBI Taxonomy" id="321314"/>
    <lineage>
        <taxon>Bacteria</taxon>
        <taxon>Pseudomonadati</taxon>
        <taxon>Pseudomonadota</taxon>
        <taxon>Gammaproteobacteria</taxon>
        <taxon>Enterobacterales</taxon>
        <taxon>Enterobacteriaceae</taxon>
        <taxon>Salmonella</taxon>
    </lineage>
</organism>
<reference key="1">
    <citation type="journal article" date="2005" name="Nucleic Acids Res.">
        <title>The genome sequence of Salmonella enterica serovar Choleraesuis, a highly invasive and resistant zoonotic pathogen.</title>
        <authorList>
            <person name="Chiu C.-H."/>
            <person name="Tang P."/>
            <person name="Chu C."/>
            <person name="Hu S."/>
            <person name="Bao Q."/>
            <person name="Yu J."/>
            <person name="Chou Y.-Y."/>
            <person name="Wang H.-S."/>
            <person name="Lee Y.-S."/>
        </authorList>
    </citation>
    <scope>NUCLEOTIDE SEQUENCE [LARGE SCALE GENOMIC DNA]</scope>
    <source>
        <strain>SC-B67</strain>
    </source>
</reference>
<evidence type="ECO:0000250" key="1"/>
<evidence type="ECO:0000255" key="2">
    <source>
        <dbReference type="HAMAP-Rule" id="MF_01576"/>
    </source>
</evidence>
<keyword id="KW-0028">Amino-acid biosynthesis</keyword>
<keyword id="KW-0368">Histidine biosynthesis</keyword>
<keyword id="KW-0378">Hydrolase</keyword>
<keyword id="KW-0486">Methionine biosynthesis</keyword>
<keyword id="KW-0511">Multifunctional enzyme</keyword>
<keyword id="KW-0521">NADP</keyword>
<keyword id="KW-0554">One-carbon metabolism</keyword>
<keyword id="KW-0560">Oxidoreductase</keyword>
<keyword id="KW-0658">Purine biosynthesis</keyword>
<accession>Q57S24</accession>
<dbReference type="EC" id="1.5.1.5" evidence="2"/>
<dbReference type="EC" id="3.5.4.9" evidence="2"/>
<dbReference type="EMBL" id="AE017220">
    <property type="protein sequence ID" value="AAX64487.1"/>
    <property type="molecule type" value="Genomic_DNA"/>
</dbReference>
<dbReference type="RefSeq" id="WP_000729165.1">
    <property type="nucleotide sequence ID" value="NC_006905.1"/>
</dbReference>
<dbReference type="SMR" id="Q57S24"/>
<dbReference type="KEGG" id="sec:SCH_0581"/>
<dbReference type="HOGENOM" id="CLU_034045_2_1_6"/>
<dbReference type="UniPathway" id="UPA00193"/>
<dbReference type="Proteomes" id="UP000000538">
    <property type="component" value="Chromosome"/>
</dbReference>
<dbReference type="GO" id="GO:0005829">
    <property type="term" value="C:cytosol"/>
    <property type="evidence" value="ECO:0007669"/>
    <property type="project" value="TreeGrafter"/>
</dbReference>
<dbReference type="GO" id="GO:0004477">
    <property type="term" value="F:methenyltetrahydrofolate cyclohydrolase activity"/>
    <property type="evidence" value="ECO:0007669"/>
    <property type="project" value="UniProtKB-UniRule"/>
</dbReference>
<dbReference type="GO" id="GO:0004488">
    <property type="term" value="F:methylenetetrahydrofolate dehydrogenase (NADP+) activity"/>
    <property type="evidence" value="ECO:0007669"/>
    <property type="project" value="UniProtKB-UniRule"/>
</dbReference>
<dbReference type="GO" id="GO:0000105">
    <property type="term" value="P:L-histidine biosynthetic process"/>
    <property type="evidence" value="ECO:0007669"/>
    <property type="project" value="UniProtKB-KW"/>
</dbReference>
<dbReference type="GO" id="GO:0009086">
    <property type="term" value="P:methionine biosynthetic process"/>
    <property type="evidence" value="ECO:0007669"/>
    <property type="project" value="UniProtKB-KW"/>
</dbReference>
<dbReference type="GO" id="GO:0006164">
    <property type="term" value="P:purine nucleotide biosynthetic process"/>
    <property type="evidence" value="ECO:0007669"/>
    <property type="project" value="UniProtKB-KW"/>
</dbReference>
<dbReference type="GO" id="GO:0035999">
    <property type="term" value="P:tetrahydrofolate interconversion"/>
    <property type="evidence" value="ECO:0007669"/>
    <property type="project" value="UniProtKB-UniRule"/>
</dbReference>
<dbReference type="CDD" id="cd01080">
    <property type="entry name" value="NAD_bind_m-THF_DH_Cyclohyd"/>
    <property type="match status" value="1"/>
</dbReference>
<dbReference type="FunFam" id="3.40.50.10860:FF:000001">
    <property type="entry name" value="Bifunctional protein FolD"/>
    <property type="match status" value="1"/>
</dbReference>
<dbReference type="FunFam" id="3.40.50.720:FF:000006">
    <property type="entry name" value="Bifunctional protein FolD"/>
    <property type="match status" value="1"/>
</dbReference>
<dbReference type="Gene3D" id="3.40.50.10860">
    <property type="entry name" value="Leucine Dehydrogenase, chain A, domain 1"/>
    <property type="match status" value="1"/>
</dbReference>
<dbReference type="Gene3D" id="3.40.50.720">
    <property type="entry name" value="NAD(P)-binding Rossmann-like Domain"/>
    <property type="match status" value="1"/>
</dbReference>
<dbReference type="HAMAP" id="MF_01576">
    <property type="entry name" value="THF_DHG_CYH"/>
    <property type="match status" value="1"/>
</dbReference>
<dbReference type="InterPro" id="IPR046346">
    <property type="entry name" value="Aminoacid_DH-like_N_sf"/>
</dbReference>
<dbReference type="InterPro" id="IPR036291">
    <property type="entry name" value="NAD(P)-bd_dom_sf"/>
</dbReference>
<dbReference type="InterPro" id="IPR000672">
    <property type="entry name" value="THF_DH/CycHdrlase"/>
</dbReference>
<dbReference type="InterPro" id="IPR020630">
    <property type="entry name" value="THF_DH/CycHdrlase_cat_dom"/>
</dbReference>
<dbReference type="InterPro" id="IPR020867">
    <property type="entry name" value="THF_DH/CycHdrlase_CS"/>
</dbReference>
<dbReference type="InterPro" id="IPR020631">
    <property type="entry name" value="THF_DH/CycHdrlase_NAD-bd_dom"/>
</dbReference>
<dbReference type="NCBIfam" id="NF008058">
    <property type="entry name" value="PRK10792.1"/>
    <property type="match status" value="1"/>
</dbReference>
<dbReference type="NCBIfam" id="NF010783">
    <property type="entry name" value="PRK14186.1"/>
    <property type="match status" value="1"/>
</dbReference>
<dbReference type="PANTHER" id="PTHR48099:SF5">
    <property type="entry name" value="C-1-TETRAHYDROFOLATE SYNTHASE, CYTOPLASMIC"/>
    <property type="match status" value="1"/>
</dbReference>
<dbReference type="PANTHER" id="PTHR48099">
    <property type="entry name" value="C-1-TETRAHYDROFOLATE SYNTHASE, CYTOPLASMIC-RELATED"/>
    <property type="match status" value="1"/>
</dbReference>
<dbReference type="Pfam" id="PF00763">
    <property type="entry name" value="THF_DHG_CYH"/>
    <property type="match status" value="1"/>
</dbReference>
<dbReference type="Pfam" id="PF02882">
    <property type="entry name" value="THF_DHG_CYH_C"/>
    <property type="match status" value="1"/>
</dbReference>
<dbReference type="PRINTS" id="PR00085">
    <property type="entry name" value="THFDHDRGNASE"/>
</dbReference>
<dbReference type="SUPFAM" id="SSF53223">
    <property type="entry name" value="Aminoacid dehydrogenase-like, N-terminal domain"/>
    <property type="match status" value="1"/>
</dbReference>
<dbReference type="SUPFAM" id="SSF51735">
    <property type="entry name" value="NAD(P)-binding Rossmann-fold domains"/>
    <property type="match status" value="1"/>
</dbReference>
<dbReference type="PROSITE" id="PS00766">
    <property type="entry name" value="THF_DHG_CYH_1"/>
    <property type="match status" value="1"/>
</dbReference>
<dbReference type="PROSITE" id="PS00767">
    <property type="entry name" value="THF_DHG_CYH_2"/>
    <property type="match status" value="1"/>
</dbReference>
<protein>
    <recommendedName>
        <fullName evidence="2">Bifunctional protein FolD</fullName>
    </recommendedName>
    <domain>
        <recommendedName>
            <fullName evidence="2">Methylenetetrahydrofolate dehydrogenase</fullName>
            <ecNumber evidence="2">1.5.1.5</ecNumber>
        </recommendedName>
    </domain>
    <domain>
        <recommendedName>
            <fullName evidence="2">Methenyltetrahydrofolate cyclohydrolase</fullName>
            <ecNumber evidence="2">3.5.4.9</ecNumber>
        </recommendedName>
    </domain>
</protein>
<comment type="function">
    <text evidence="2">Catalyzes the oxidation of 5,10-methylenetetrahydrofolate to 5,10-methenyltetrahydrofolate and then the hydrolysis of 5,10-methenyltetrahydrofolate to 10-formyltetrahydrofolate.</text>
</comment>
<comment type="catalytic activity">
    <reaction evidence="2">
        <text>(6R)-5,10-methylene-5,6,7,8-tetrahydrofolate + NADP(+) = (6R)-5,10-methenyltetrahydrofolate + NADPH</text>
        <dbReference type="Rhea" id="RHEA:22812"/>
        <dbReference type="ChEBI" id="CHEBI:15636"/>
        <dbReference type="ChEBI" id="CHEBI:57455"/>
        <dbReference type="ChEBI" id="CHEBI:57783"/>
        <dbReference type="ChEBI" id="CHEBI:58349"/>
        <dbReference type="EC" id="1.5.1.5"/>
    </reaction>
</comment>
<comment type="catalytic activity">
    <reaction evidence="2">
        <text>(6R)-5,10-methenyltetrahydrofolate + H2O = (6R)-10-formyltetrahydrofolate + H(+)</text>
        <dbReference type="Rhea" id="RHEA:23700"/>
        <dbReference type="ChEBI" id="CHEBI:15377"/>
        <dbReference type="ChEBI" id="CHEBI:15378"/>
        <dbReference type="ChEBI" id="CHEBI:57455"/>
        <dbReference type="ChEBI" id="CHEBI:195366"/>
        <dbReference type="EC" id="3.5.4.9"/>
    </reaction>
</comment>
<comment type="pathway">
    <text evidence="2">One-carbon metabolism; tetrahydrofolate interconversion.</text>
</comment>
<comment type="subunit">
    <text evidence="2">Homodimer.</text>
</comment>
<comment type="similarity">
    <text evidence="2">Belongs to the tetrahydrofolate dehydrogenase/cyclohydrolase family.</text>
</comment>
<name>FOLD_SALCH</name>
<proteinExistence type="inferred from homology"/>
<gene>
    <name evidence="2" type="primary">folD</name>
    <name type="ordered locus">SCH_0581</name>
</gene>
<sequence>MAAKIIDGKTIAQQVRSEVAQKVQARVAAGLRAPGLAVVLVGSNPASQIYVASKRKACDEVGFVSRSYDLPETTSEAELLALIDTLNADNTIDGILVQLPLPAGIDNVKVLERIAPDKDVDGFHPYNVGRLCQRAPRLRPCTPRGIVTLLERYNIDTYGLNAVVIGASNIVGRPMSMELLLAGCTTTVTHRFTKDLRHHVEHADLLIVAVGKPGFIPGEWIKEGAIVIDVGINRLENGKVVGDVVFDEAAARASYITPVPGGVGPMTVATLIENTLQACIEYHDPQGK</sequence>